<organism>
    <name type="scientific">Roseiflexus sp. (strain RS-1)</name>
    <dbReference type="NCBI Taxonomy" id="357808"/>
    <lineage>
        <taxon>Bacteria</taxon>
        <taxon>Bacillati</taxon>
        <taxon>Chloroflexota</taxon>
        <taxon>Chloroflexia</taxon>
        <taxon>Chloroflexales</taxon>
        <taxon>Roseiflexineae</taxon>
        <taxon>Roseiflexaceae</taxon>
        <taxon>Roseiflexus</taxon>
    </lineage>
</organism>
<sequence length="471" mass="51233">MAGATGVVTDIIGVVLNAKFPEDQTPEIYNALEIRLENGKRLVAEVQQQLGGGVVKAVAMSSTDGMRRGVKAIDTGRPIAVPVGPGTLGRVFDVLGDPIDGEGPVQATEYRPIHRPPPALEDQSTTAQIFETGIKVIDLIAPFTRGGKTGIFGGAGVGKTVVIQELIANVAKEQSGFSVFAGVGERSREGNDLIHEMKEARIDEQTRVFDKTVMVFGQMNEPPGARLRVALTAMTMAEYFRDEGRDVLLFIDNIFRFVQAGSEVSALLGRMPSQVGYQPTLGTEMGELQERITSTKKGSITSMQAVYVPADDYTDPAPATVFSHLDATITLERSIAAKGIYPAVDPLASTSRILDPNIVGAEHYRVAREVQRVLQRYKDLQDIIAILGVEELSDDDKLTVARARKIERFFSQPFTVAQQFTGRPGKYVPIAETVKSFARLLAGEVDHIPEQFFLLQGGLDDVIQAYEASRR</sequence>
<reference key="1">
    <citation type="submission" date="2007-04" db="EMBL/GenBank/DDBJ databases">
        <title>Complete sequence of Roseiflexus sp. RS-1.</title>
        <authorList>
            <consortium name="US DOE Joint Genome Institute"/>
            <person name="Copeland A."/>
            <person name="Lucas S."/>
            <person name="Lapidus A."/>
            <person name="Barry K."/>
            <person name="Detter J.C."/>
            <person name="Glavina del Rio T."/>
            <person name="Hammon N."/>
            <person name="Israni S."/>
            <person name="Dalin E."/>
            <person name="Tice H."/>
            <person name="Pitluck S."/>
            <person name="Chertkov O."/>
            <person name="Brettin T."/>
            <person name="Bruce D."/>
            <person name="Han C."/>
            <person name="Schmutz J."/>
            <person name="Larimer F."/>
            <person name="Land M."/>
            <person name="Hauser L."/>
            <person name="Kyrpides N."/>
            <person name="Mikhailova N."/>
            <person name="Bryant D.A."/>
            <person name="Richardson P."/>
        </authorList>
    </citation>
    <scope>NUCLEOTIDE SEQUENCE [LARGE SCALE GENOMIC DNA]</scope>
    <source>
        <strain>RS-1</strain>
    </source>
</reference>
<name>ATPB_ROSS1</name>
<accession>A5UQN3</accession>
<protein>
    <recommendedName>
        <fullName evidence="1">ATP synthase subunit beta</fullName>
        <ecNumber evidence="1">7.1.2.2</ecNumber>
    </recommendedName>
    <alternativeName>
        <fullName evidence="1">ATP synthase F1 sector subunit beta</fullName>
    </alternativeName>
    <alternativeName>
        <fullName evidence="1">F-ATPase subunit beta</fullName>
    </alternativeName>
</protein>
<evidence type="ECO:0000255" key="1">
    <source>
        <dbReference type="HAMAP-Rule" id="MF_01347"/>
    </source>
</evidence>
<comment type="function">
    <text evidence="1">Produces ATP from ADP in the presence of a proton gradient across the membrane. The catalytic sites are hosted primarily by the beta subunits.</text>
</comment>
<comment type="catalytic activity">
    <reaction evidence="1">
        <text>ATP + H2O + 4 H(+)(in) = ADP + phosphate + 5 H(+)(out)</text>
        <dbReference type="Rhea" id="RHEA:57720"/>
        <dbReference type="ChEBI" id="CHEBI:15377"/>
        <dbReference type="ChEBI" id="CHEBI:15378"/>
        <dbReference type="ChEBI" id="CHEBI:30616"/>
        <dbReference type="ChEBI" id="CHEBI:43474"/>
        <dbReference type="ChEBI" id="CHEBI:456216"/>
        <dbReference type="EC" id="7.1.2.2"/>
    </reaction>
</comment>
<comment type="subunit">
    <text evidence="1">F-type ATPases have 2 components, CF(1) - the catalytic core - and CF(0) - the membrane proton channel. CF(1) has five subunits: alpha(3), beta(3), gamma(1), delta(1), epsilon(1). CF(0) has four main subunits: a(1), b(1), b'(1) and c(9-12).</text>
</comment>
<comment type="subcellular location">
    <subcellularLocation>
        <location evidence="1">Cell membrane</location>
        <topology evidence="1">Peripheral membrane protein</topology>
    </subcellularLocation>
</comment>
<comment type="similarity">
    <text evidence="1">Belongs to the ATPase alpha/beta chains family.</text>
</comment>
<proteinExistence type="inferred from homology"/>
<keyword id="KW-0066">ATP synthesis</keyword>
<keyword id="KW-0067">ATP-binding</keyword>
<keyword id="KW-1003">Cell membrane</keyword>
<keyword id="KW-0139">CF(1)</keyword>
<keyword id="KW-0375">Hydrogen ion transport</keyword>
<keyword id="KW-0406">Ion transport</keyword>
<keyword id="KW-0472">Membrane</keyword>
<keyword id="KW-0547">Nucleotide-binding</keyword>
<keyword id="KW-1278">Translocase</keyword>
<keyword id="KW-0813">Transport</keyword>
<dbReference type="EC" id="7.1.2.2" evidence="1"/>
<dbReference type="EMBL" id="CP000686">
    <property type="protein sequence ID" value="ABQ88936.1"/>
    <property type="molecule type" value="Genomic_DNA"/>
</dbReference>
<dbReference type="RefSeq" id="WP_011955293.1">
    <property type="nucleotide sequence ID" value="NC_009523.1"/>
</dbReference>
<dbReference type="SMR" id="A5UQN3"/>
<dbReference type="STRING" id="357808.RoseRS_0512"/>
<dbReference type="KEGG" id="rrs:RoseRS_0512"/>
<dbReference type="eggNOG" id="COG0055">
    <property type="taxonomic scope" value="Bacteria"/>
</dbReference>
<dbReference type="HOGENOM" id="CLU_022398_0_2_0"/>
<dbReference type="OrthoDB" id="9801639at2"/>
<dbReference type="Proteomes" id="UP000006554">
    <property type="component" value="Chromosome"/>
</dbReference>
<dbReference type="GO" id="GO:0005886">
    <property type="term" value="C:plasma membrane"/>
    <property type="evidence" value="ECO:0007669"/>
    <property type="project" value="UniProtKB-SubCell"/>
</dbReference>
<dbReference type="GO" id="GO:0045259">
    <property type="term" value="C:proton-transporting ATP synthase complex"/>
    <property type="evidence" value="ECO:0007669"/>
    <property type="project" value="UniProtKB-KW"/>
</dbReference>
<dbReference type="GO" id="GO:0005524">
    <property type="term" value="F:ATP binding"/>
    <property type="evidence" value="ECO:0007669"/>
    <property type="project" value="UniProtKB-UniRule"/>
</dbReference>
<dbReference type="GO" id="GO:0016887">
    <property type="term" value="F:ATP hydrolysis activity"/>
    <property type="evidence" value="ECO:0007669"/>
    <property type="project" value="InterPro"/>
</dbReference>
<dbReference type="GO" id="GO:0046933">
    <property type="term" value="F:proton-transporting ATP synthase activity, rotational mechanism"/>
    <property type="evidence" value="ECO:0007669"/>
    <property type="project" value="UniProtKB-UniRule"/>
</dbReference>
<dbReference type="CDD" id="cd18110">
    <property type="entry name" value="ATP-synt_F1_beta_C"/>
    <property type="match status" value="1"/>
</dbReference>
<dbReference type="CDD" id="cd18115">
    <property type="entry name" value="ATP-synt_F1_beta_N"/>
    <property type="match status" value="1"/>
</dbReference>
<dbReference type="CDD" id="cd01133">
    <property type="entry name" value="F1-ATPase_beta_CD"/>
    <property type="match status" value="1"/>
</dbReference>
<dbReference type="FunFam" id="1.10.1140.10:FF:000001">
    <property type="entry name" value="ATP synthase subunit beta"/>
    <property type="match status" value="1"/>
</dbReference>
<dbReference type="FunFam" id="3.40.50.300:FF:000004">
    <property type="entry name" value="ATP synthase subunit beta"/>
    <property type="match status" value="1"/>
</dbReference>
<dbReference type="Gene3D" id="2.40.10.170">
    <property type="match status" value="1"/>
</dbReference>
<dbReference type="Gene3D" id="1.10.1140.10">
    <property type="entry name" value="Bovine Mitochondrial F1-atpase, Atp Synthase Beta Chain, Chain D, domain 3"/>
    <property type="match status" value="1"/>
</dbReference>
<dbReference type="Gene3D" id="3.40.50.300">
    <property type="entry name" value="P-loop containing nucleotide triphosphate hydrolases"/>
    <property type="match status" value="1"/>
</dbReference>
<dbReference type="HAMAP" id="MF_01347">
    <property type="entry name" value="ATP_synth_beta_bact"/>
    <property type="match status" value="1"/>
</dbReference>
<dbReference type="InterPro" id="IPR003593">
    <property type="entry name" value="AAA+_ATPase"/>
</dbReference>
<dbReference type="InterPro" id="IPR055190">
    <property type="entry name" value="ATP-synt_VA_C"/>
</dbReference>
<dbReference type="InterPro" id="IPR005722">
    <property type="entry name" value="ATP_synth_F1_bsu"/>
</dbReference>
<dbReference type="InterPro" id="IPR020003">
    <property type="entry name" value="ATPase_a/bsu_AS"/>
</dbReference>
<dbReference type="InterPro" id="IPR050053">
    <property type="entry name" value="ATPase_alpha/beta_chains"/>
</dbReference>
<dbReference type="InterPro" id="IPR004100">
    <property type="entry name" value="ATPase_F1/V1/A1_a/bsu_N"/>
</dbReference>
<dbReference type="InterPro" id="IPR036121">
    <property type="entry name" value="ATPase_F1/V1/A1_a/bsu_N_sf"/>
</dbReference>
<dbReference type="InterPro" id="IPR000194">
    <property type="entry name" value="ATPase_F1/V1/A1_a/bsu_nucl-bd"/>
</dbReference>
<dbReference type="InterPro" id="IPR024034">
    <property type="entry name" value="ATPase_F1/V1_b/a_C"/>
</dbReference>
<dbReference type="InterPro" id="IPR027417">
    <property type="entry name" value="P-loop_NTPase"/>
</dbReference>
<dbReference type="NCBIfam" id="TIGR01039">
    <property type="entry name" value="atpD"/>
    <property type="match status" value="1"/>
</dbReference>
<dbReference type="PANTHER" id="PTHR15184">
    <property type="entry name" value="ATP SYNTHASE"/>
    <property type="match status" value="1"/>
</dbReference>
<dbReference type="PANTHER" id="PTHR15184:SF71">
    <property type="entry name" value="ATP SYNTHASE SUBUNIT BETA, MITOCHONDRIAL"/>
    <property type="match status" value="1"/>
</dbReference>
<dbReference type="Pfam" id="PF00006">
    <property type="entry name" value="ATP-synt_ab"/>
    <property type="match status" value="1"/>
</dbReference>
<dbReference type="Pfam" id="PF02874">
    <property type="entry name" value="ATP-synt_ab_N"/>
    <property type="match status" value="1"/>
</dbReference>
<dbReference type="Pfam" id="PF22919">
    <property type="entry name" value="ATP-synt_VA_C"/>
    <property type="match status" value="1"/>
</dbReference>
<dbReference type="SMART" id="SM00382">
    <property type="entry name" value="AAA"/>
    <property type="match status" value="1"/>
</dbReference>
<dbReference type="SUPFAM" id="SSF47917">
    <property type="entry name" value="C-terminal domain of alpha and beta subunits of F1 ATP synthase"/>
    <property type="match status" value="1"/>
</dbReference>
<dbReference type="SUPFAM" id="SSF50615">
    <property type="entry name" value="N-terminal domain of alpha and beta subunits of F1 ATP synthase"/>
    <property type="match status" value="1"/>
</dbReference>
<dbReference type="SUPFAM" id="SSF52540">
    <property type="entry name" value="P-loop containing nucleoside triphosphate hydrolases"/>
    <property type="match status" value="1"/>
</dbReference>
<dbReference type="PROSITE" id="PS00152">
    <property type="entry name" value="ATPASE_ALPHA_BETA"/>
    <property type="match status" value="1"/>
</dbReference>
<feature type="chain" id="PRO_1000055156" description="ATP synthase subunit beta">
    <location>
        <begin position="1"/>
        <end position="471"/>
    </location>
</feature>
<feature type="binding site" evidence="1">
    <location>
        <begin position="153"/>
        <end position="160"/>
    </location>
    <ligand>
        <name>ATP</name>
        <dbReference type="ChEBI" id="CHEBI:30616"/>
    </ligand>
</feature>
<gene>
    <name evidence="1" type="primary">atpD</name>
    <name type="ordered locus">RoseRS_0512</name>
</gene>